<organism>
    <name type="scientific">Vibrio cholerae serotype O1 (strain ATCC 39315 / El Tor Inaba N16961)</name>
    <dbReference type="NCBI Taxonomy" id="243277"/>
    <lineage>
        <taxon>Bacteria</taxon>
        <taxon>Pseudomonadati</taxon>
        <taxon>Pseudomonadota</taxon>
        <taxon>Gammaproteobacteria</taxon>
        <taxon>Vibrionales</taxon>
        <taxon>Vibrionaceae</taxon>
        <taxon>Vibrio</taxon>
    </lineage>
</organism>
<protein>
    <recommendedName>
        <fullName>Toxin HigB-2</fullName>
    </recommendedName>
</protein>
<accession>Q9KMA6</accession>
<gene>
    <name type="primary">higB-2</name>
    <name type="ordered locus">VC_A0468</name>
</gene>
<dbReference type="EMBL" id="AE003853">
    <property type="protein sequence ID" value="AAF96372.1"/>
    <property type="molecule type" value="Genomic_DNA"/>
</dbReference>
<dbReference type="PIR" id="D82455">
    <property type="entry name" value="D82455"/>
</dbReference>
<dbReference type="RefSeq" id="NP_232860.1">
    <property type="nucleotide sequence ID" value="NC_002506.1"/>
</dbReference>
<dbReference type="RefSeq" id="WP_000843587.1">
    <property type="nucleotide sequence ID" value="NZ_LT906615.1"/>
</dbReference>
<dbReference type="PDB" id="5JA8">
    <property type="method" value="X-ray"/>
    <property type="resolution" value="2.49 A"/>
    <property type="chains" value="A/C/E/G=1-110"/>
</dbReference>
<dbReference type="PDB" id="5JA9">
    <property type="method" value="X-ray"/>
    <property type="resolution" value="1.85 A"/>
    <property type="chains" value="C/D=1-110"/>
</dbReference>
<dbReference type="PDB" id="5JAA">
    <property type="method" value="X-ray"/>
    <property type="resolution" value="2.99 A"/>
    <property type="chains" value="C/D=2-110"/>
</dbReference>
<dbReference type="PDB" id="5MJE">
    <property type="method" value="X-ray"/>
    <property type="resolution" value="2.60 A"/>
    <property type="chains" value="A=1-110"/>
</dbReference>
<dbReference type="PDB" id="8A0X">
    <property type="method" value="X-ray"/>
    <property type="resolution" value="3.30 A"/>
    <property type="chains" value="C/D=1-110"/>
</dbReference>
<dbReference type="PDBsum" id="5JA8"/>
<dbReference type="PDBsum" id="5JA9"/>
<dbReference type="PDBsum" id="5JAA"/>
<dbReference type="PDBsum" id="5MJE"/>
<dbReference type="PDBsum" id="8A0X"/>
<dbReference type="SMR" id="Q9KMA6"/>
<dbReference type="STRING" id="243277.VC_A0468"/>
<dbReference type="ABCD" id="Q9KMA6">
    <property type="antibodies" value="3 sequenced antibodies"/>
</dbReference>
<dbReference type="DNASU" id="2611854"/>
<dbReference type="EnsemblBacteria" id="AAF96372">
    <property type="protein sequence ID" value="AAF96372"/>
    <property type="gene ID" value="VC_A0468"/>
</dbReference>
<dbReference type="KEGG" id="vch:VC_A0468"/>
<dbReference type="PATRIC" id="fig|243277.26.peg.3094"/>
<dbReference type="eggNOG" id="COG4737">
    <property type="taxonomic scope" value="Bacteria"/>
</dbReference>
<dbReference type="HOGENOM" id="CLU_110687_1_2_6"/>
<dbReference type="Proteomes" id="UP000000584">
    <property type="component" value="Chromosome 2"/>
</dbReference>
<dbReference type="InterPro" id="IPR009387">
    <property type="entry name" value="HigB-2"/>
</dbReference>
<dbReference type="Pfam" id="PF06296">
    <property type="entry name" value="RelE"/>
    <property type="match status" value="1"/>
</dbReference>
<dbReference type="PIRSF" id="PIRSF039032">
    <property type="entry name" value="HigB-2"/>
    <property type="match status" value="1"/>
</dbReference>
<feature type="chain" id="PRO_0000278769" description="Toxin HigB-2">
    <location>
        <begin position="1"/>
        <end position="110"/>
    </location>
</feature>
<feature type="strand" evidence="2">
    <location>
        <begin position="5"/>
        <end position="7"/>
    </location>
</feature>
<feature type="helix" evidence="2">
    <location>
        <begin position="9"/>
        <end position="18"/>
    </location>
</feature>
<feature type="helix" evidence="2">
    <location>
        <begin position="21"/>
        <end position="33"/>
    </location>
</feature>
<feature type="strand" evidence="2">
    <location>
        <begin position="38"/>
        <end position="40"/>
    </location>
</feature>
<feature type="strand" evidence="2">
    <location>
        <begin position="44"/>
        <end position="46"/>
    </location>
</feature>
<feature type="strand" evidence="2">
    <location>
        <begin position="48"/>
        <end position="52"/>
    </location>
</feature>
<feature type="strand" evidence="3">
    <location>
        <begin position="55"/>
        <end position="57"/>
    </location>
</feature>
<feature type="strand" evidence="2">
    <location>
        <begin position="63"/>
        <end position="70"/>
    </location>
</feature>
<feature type="turn" evidence="2">
    <location>
        <begin position="71"/>
        <end position="74"/>
    </location>
</feature>
<feature type="strand" evidence="2">
    <location>
        <begin position="75"/>
        <end position="83"/>
    </location>
</feature>
<feature type="turn" evidence="2">
    <location>
        <begin position="84"/>
        <end position="86"/>
    </location>
</feature>
<feature type="helix" evidence="2">
    <location>
        <begin position="92"/>
        <end position="107"/>
    </location>
</feature>
<comment type="function">
    <text evidence="1">Toxic component of a type II toxin-antitoxin (TA) system. Inhibits translation by cleavage of mRNA.</text>
</comment>
<comment type="induction">
    <text evidence="1">Induced by amino acid starvation and the protein synthesis inhibitor chloramphenicol.</text>
</comment>
<comment type="miscellaneous">
    <text>HigB-2/HigA-2 has been shown to stabilize plasmids very efficiently in E.coli. Three hours of ectopic expression of higB-2 results in bacteriostasis without any detectable loss of viability.</text>
</comment>
<proteinExistence type="evidence at protein level"/>
<keyword id="KW-0002">3D-structure</keyword>
<keyword id="KW-1185">Reference proteome</keyword>
<keyword id="KW-1277">Toxin-antitoxin system</keyword>
<sequence>MKSVFVESTIFEKYRDEYLSDEEYRLFQAELMLNPKLGDVIQGTGGLRKIRVASKGKGKRGGSRIIYYFLDEKRRFYLLTIYGKNEMSDLNANQRKQLMAFMEAWRNEQS</sequence>
<reference key="1">
    <citation type="journal article" date="2000" name="Nature">
        <title>DNA sequence of both chromosomes of the cholera pathogen Vibrio cholerae.</title>
        <authorList>
            <person name="Heidelberg J.F."/>
            <person name="Eisen J.A."/>
            <person name="Nelson W.C."/>
            <person name="Clayton R.A."/>
            <person name="Gwinn M.L."/>
            <person name="Dodson R.J."/>
            <person name="Haft D.H."/>
            <person name="Hickey E.K."/>
            <person name="Peterson J.D."/>
            <person name="Umayam L.A."/>
            <person name="Gill S.R."/>
            <person name="Nelson K.E."/>
            <person name="Read T.D."/>
            <person name="Tettelin H."/>
            <person name="Richardson D.L."/>
            <person name="Ermolaeva M.D."/>
            <person name="Vamathevan J.J."/>
            <person name="Bass S."/>
            <person name="Qin H."/>
            <person name="Dragoi I."/>
            <person name="Sellers P."/>
            <person name="McDonald L.A."/>
            <person name="Utterback T.R."/>
            <person name="Fleischmann R.D."/>
            <person name="Nierman W.C."/>
            <person name="White O."/>
            <person name="Salzberg S.L."/>
            <person name="Smith H.O."/>
            <person name="Colwell R.R."/>
            <person name="Mekalanos J.J."/>
            <person name="Venter J.C."/>
            <person name="Fraser C.M."/>
        </authorList>
    </citation>
    <scope>NUCLEOTIDE SEQUENCE [LARGE SCALE GENOMIC DNA]</scope>
    <source>
        <strain>ATCC 39315 / El Tor Inaba N16961</strain>
    </source>
</reference>
<reference key="2">
    <citation type="journal article" date="2006" name="Mol. Microbiol.">
        <title>Two higBA loci in the Vibrio cholerae superintegron encode mRNA cleaving enzymes and can stabilize plasmids.</title>
        <authorList>
            <person name="Christensen-Dalsgaard M."/>
            <person name="Gerdes K."/>
        </authorList>
    </citation>
    <scope>FUNCTION</scope>
    <scope>INDUCTION</scope>
    <source>
        <strain>ATCC 39315 / El Tor Inaba N16961</strain>
    </source>
</reference>
<evidence type="ECO:0000269" key="1">
    <source>
    </source>
</evidence>
<evidence type="ECO:0007829" key="2">
    <source>
        <dbReference type="PDB" id="5JA9"/>
    </source>
</evidence>
<evidence type="ECO:0007829" key="3">
    <source>
        <dbReference type="PDB" id="8A0X"/>
    </source>
</evidence>
<name>HIGB2_VIBCH</name>